<proteinExistence type="inferred from homology"/>
<organism>
    <name type="scientific">Maridesulfovibrio salexigens (strain ATCC 14822 / DSM 2638 / NCIMB 8403 / VKM B-1763)</name>
    <name type="common">Desulfovibrio salexigens</name>
    <dbReference type="NCBI Taxonomy" id="526222"/>
    <lineage>
        <taxon>Bacteria</taxon>
        <taxon>Pseudomonadati</taxon>
        <taxon>Thermodesulfobacteriota</taxon>
        <taxon>Desulfovibrionia</taxon>
        <taxon>Desulfovibrionales</taxon>
        <taxon>Desulfovibrionaceae</taxon>
        <taxon>Maridesulfovibrio</taxon>
    </lineage>
</organism>
<gene>
    <name evidence="1" type="primary">rplW</name>
    <name type="ordered locus">Desal_1187</name>
</gene>
<evidence type="ECO:0000255" key="1">
    <source>
        <dbReference type="HAMAP-Rule" id="MF_01369"/>
    </source>
</evidence>
<evidence type="ECO:0000305" key="2"/>
<name>RL23_MARSD</name>
<accession>C6C187</accession>
<dbReference type="EMBL" id="CP001649">
    <property type="protein sequence ID" value="ACS79250.1"/>
    <property type="molecule type" value="Genomic_DNA"/>
</dbReference>
<dbReference type="RefSeq" id="WP_015851069.1">
    <property type="nucleotide sequence ID" value="NC_012881.1"/>
</dbReference>
<dbReference type="SMR" id="C6C187"/>
<dbReference type="STRING" id="526222.Desal_1187"/>
<dbReference type="KEGG" id="dsa:Desal_1187"/>
<dbReference type="eggNOG" id="COG0089">
    <property type="taxonomic scope" value="Bacteria"/>
</dbReference>
<dbReference type="HOGENOM" id="CLU_037562_3_1_7"/>
<dbReference type="OrthoDB" id="9793353at2"/>
<dbReference type="Proteomes" id="UP000002601">
    <property type="component" value="Chromosome"/>
</dbReference>
<dbReference type="GO" id="GO:1990904">
    <property type="term" value="C:ribonucleoprotein complex"/>
    <property type="evidence" value="ECO:0007669"/>
    <property type="project" value="UniProtKB-KW"/>
</dbReference>
<dbReference type="GO" id="GO:0005840">
    <property type="term" value="C:ribosome"/>
    <property type="evidence" value="ECO:0007669"/>
    <property type="project" value="UniProtKB-KW"/>
</dbReference>
<dbReference type="GO" id="GO:0019843">
    <property type="term" value="F:rRNA binding"/>
    <property type="evidence" value="ECO:0007669"/>
    <property type="project" value="UniProtKB-UniRule"/>
</dbReference>
<dbReference type="GO" id="GO:0003735">
    <property type="term" value="F:structural constituent of ribosome"/>
    <property type="evidence" value="ECO:0007669"/>
    <property type="project" value="InterPro"/>
</dbReference>
<dbReference type="GO" id="GO:0006412">
    <property type="term" value="P:translation"/>
    <property type="evidence" value="ECO:0007669"/>
    <property type="project" value="UniProtKB-UniRule"/>
</dbReference>
<dbReference type="Gene3D" id="3.30.70.330">
    <property type="match status" value="1"/>
</dbReference>
<dbReference type="HAMAP" id="MF_01369_B">
    <property type="entry name" value="Ribosomal_uL23_B"/>
    <property type="match status" value="1"/>
</dbReference>
<dbReference type="InterPro" id="IPR012677">
    <property type="entry name" value="Nucleotide-bd_a/b_plait_sf"/>
</dbReference>
<dbReference type="InterPro" id="IPR013025">
    <property type="entry name" value="Ribosomal_uL23-like"/>
</dbReference>
<dbReference type="InterPro" id="IPR012678">
    <property type="entry name" value="Ribosomal_uL23/eL15/eS24_sf"/>
</dbReference>
<dbReference type="InterPro" id="IPR001014">
    <property type="entry name" value="Ribosomal_uL23_CS"/>
</dbReference>
<dbReference type="NCBIfam" id="NF004359">
    <property type="entry name" value="PRK05738.1-3"/>
    <property type="match status" value="1"/>
</dbReference>
<dbReference type="NCBIfam" id="NF004363">
    <property type="entry name" value="PRK05738.2-4"/>
    <property type="match status" value="1"/>
</dbReference>
<dbReference type="PANTHER" id="PTHR11620">
    <property type="entry name" value="60S RIBOSOMAL PROTEIN L23A"/>
    <property type="match status" value="1"/>
</dbReference>
<dbReference type="Pfam" id="PF00276">
    <property type="entry name" value="Ribosomal_L23"/>
    <property type="match status" value="1"/>
</dbReference>
<dbReference type="SUPFAM" id="SSF54189">
    <property type="entry name" value="Ribosomal proteins S24e, L23 and L15e"/>
    <property type="match status" value="1"/>
</dbReference>
<dbReference type="PROSITE" id="PS00050">
    <property type="entry name" value="RIBOSOMAL_L23"/>
    <property type="match status" value="1"/>
</dbReference>
<keyword id="KW-1185">Reference proteome</keyword>
<keyword id="KW-0687">Ribonucleoprotein</keyword>
<keyword id="KW-0689">Ribosomal protein</keyword>
<keyword id="KW-0694">RNA-binding</keyword>
<keyword id="KW-0699">rRNA-binding</keyword>
<comment type="function">
    <text evidence="1">One of the early assembly proteins it binds 23S rRNA. One of the proteins that surrounds the polypeptide exit tunnel on the outside of the ribosome. Forms the main docking site for trigger factor binding to the ribosome.</text>
</comment>
<comment type="subunit">
    <text evidence="1">Part of the 50S ribosomal subunit. Contacts protein L29, and trigger factor when it is bound to the ribosome.</text>
</comment>
<comment type="similarity">
    <text evidence="1">Belongs to the universal ribosomal protein uL23 family.</text>
</comment>
<sequence>MDYTQILIKPVISEKATDIKEAANQVAFYVLPSANKTEVKKAVESAFDVKVDSVRIVRKRPGLRRKFGRVVGKLSGYKKAYVKLSEGEKIEFFEGV</sequence>
<protein>
    <recommendedName>
        <fullName evidence="1">Large ribosomal subunit protein uL23</fullName>
    </recommendedName>
    <alternativeName>
        <fullName evidence="2">50S ribosomal protein L23</fullName>
    </alternativeName>
</protein>
<feature type="chain" id="PRO_1000215029" description="Large ribosomal subunit protein uL23">
    <location>
        <begin position="1"/>
        <end position="96"/>
    </location>
</feature>
<reference key="1">
    <citation type="submission" date="2009-06" db="EMBL/GenBank/DDBJ databases">
        <title>Complete sequence of Desulfovibrio salexigens DSM 2638.</title>
        <authorList>
            <consortium name="US DOE Joint Genome Institute"/>
            <person name="Lucas S."/>
            <person name="Copeland A."/>
            <person name="Lapidus A."/>
            <person name="Glavina del Rio T."/>
            <person name="Tice H."/>
            <person name="Bruce D."/>
            <person name="Goodwin L."/>
            <person name="Pitluck S."/>
            <person name="Munk A.C."/>
            <person name="Brettin T."/>
            <person name="Detter J.C."/>
            <person name="Han C."/>
            <person name="Tapia R."/>
            <person name="Larimer F."/>
            <person name="Land M."/>
            <person name="Hauser L."/>
            <person name="Kyrpides N."/>
            <person name="Anderson I."/>
            <person name="Wall J.D."/>
            <person name="Arkin A.P."/>
            <person name="Dehal P."/>
            <person name="Chivian D."/>
            <person name="Giles B."/>
            <person name="Hazen T.C."/>
        </authorList>
    </citation>
    <scope>NUCLEOTIDE SEQUENCE [LARGE SCALE GENOMIC DNA]</scope>
    <source>
        <strain>ATCC 14822 / DSM 2638 / NCIMB 8403 / VKM B-1763</strain>
    </source>
</reference>